<gene>
    <name type="primary">Tspan11</name>
</gene>
<keyword id="KW-0472">Membrane</keyword>
<keyword id="KW-1185">Reference proteome</keyword>
<keyword id="KW-0812">Transmembrane</keyword>
<keyword id="KW-1133">Transmembrane helix</keyword>
<comment type="subcellular location">
    <subcellularLocation>
        <location evidence="2">Membrane</location>
        <topology evidence="2">Multi-pass membrane protein</topology>
    </subcellularLocation>
</comment>
<comment type="similarity">
    <text evidence="2">Belongs to the tetraspanin (TM4SF) family.</text>
</comment>
<dbReference type="EMBL" id="BC092652">
    <property type="protein sequence ID" value="AAH92652.1"/>
    <property type="molecule type" value="mRNA"/>
</dbReference>
<dbReference type="RefSeq" id="NP_001019433.1">
    <property type="nucleotide sequence ID" value="NM_001024262.1"/>
</dbReference>
<dbReference type="SMR" id="Q568Y5"/>
<dbReference type="FunCoup" id="Q568Y5">
    <property type="interactions" value="331"/>
</dbReference>
<dbReference type="STRING" id="10116.ENSRNOP00000074465"/>
<dbReference type="PhosphoSitePlus" id="Q568Y5"/>
<dbReference type="PaxDb" id="10116-ENSRNOP00000007198"/>
<dbReference type="Ensembl" id="ENSRNOT00000087834.2">
    <property type="protein sequence ID" value="ENSRNOP00000074465.1"/>
    <property type="gene ID" value="ENSRNOG00000054360.2"/>
</dbReference>
<dbReference type="GeneID" id="312727"/>
<dbReference type="KEGG" id="rno:312727"/>
<dbReference type="UCSC" id="RGD:1305424">
    <property type="organism name" value="rat"/>
</dbReference>
<dbReference type="AGR" id="RGD:1305424"/>
<dbReference type="CTD" id="441631"/>
<dbReference type="RGD" id="1305424">
    <property type="gene designation" value="Tspan11"/>
</dbReference>
<dbReference type="eggNOG" id="KOG3882">
    <property type="taxonomic scope" value="Eukaryota"/>
</dbReference>
<dbReference type="GeneTree" id="ENSGT00940000161249"/>
<dbReference type="HOGENOM" id="CLU_055524_5_0_1"/>
<dbReference type="InParanoid" id="Q568Y5"/>
<dbReference type="OMA" id="HCGQRAH"/>
<dbReference type="OrthoDB" id="438211at2759"/>
<dbReference type="PhylomeDB" id="Q568Y5"/>
<dbReference type="TreeFam" id="TF352892"/>
<dbReference type="PRO" id="PR:Q568Y5"/>
<dbReference type="Proteomes" id="UP000002494">
    <property type="component" value="Chromosome 4"/>
</dbReference>
<dbReference type="Bgee" id="ENSRNOG00000054360">
    <property type="expression patterns" value="Expressed in skeletal muscle tissue and 14 other cell types or tissues"/>
</dbReference>
<dbReference type="GO" id="GO:0005886">
    <property type="term" value="C:plasma membrane"/>
    <property type="evidence" value="ECO:0000318"/>
    <property type="project" value="GO_Central"/>
</dbReference>
<dbReference type="CDD" id="cd03155">
    <property type="entry name" value="CD151_like_LEL"/>
    <property type="match status" value="1"/>
</dbReference>
<dbReference type="FunFam" id="1.10.1450.10:FF:000005">
    <property type="entry name" value="Tetraspanin"/>
    <property type="match status" value="1"/>
</dbReference>
<dbReference type="Gene3D" id="1.10.1450.10">
    <property type="entry name" value="Tetraspanin"/>
    <property type="match status" value="1"/>
</dbReference>
<dbReference type="InterPro" id="IPR018499">
    <property type="entry name" value="Tetraspanin/Peripherin"/>
</dbReference>
<dbReference type="InterPro" id="IPR000301">
    <property type="entry name" value="Tetraspanin_animals"/>
</dbReference>
<dbReference type="InterPro" id="IPR008952">
    <property type="entry name" value="Tetraspanin_EC2_sf"/>
</dbReference>
<dbReference type="PANTHER" id="PTHR19282">
    <property type="entry name" value="TETRASPANIN"/>
    <property type="match status" value="1"/>
</dbReference>
<dbReference type="PANTHER" id="PTHR19282:SF198">
    <property type="entry name" value="TETRASPANIN-11"/>
    <property type="match status" value="1"/>
</dbReference>
<dbReference type="Pfam" id="PF00335">
    <property type="entry name" value="Tetraspanin"/>
    <property type="match status" value="1"/>
</dbReference>
<dbReference type="PIRSF" id="PIRSF002419">
    <property type="entry name" value="Tetraspanin"/>
    <property type="match status" value="1"/>
</dbReference>
<dbReference type="PRINTS" id="PR00259">
    <property type="entry name" value="TMFOUR"/>
</dbReference>
<dbReference type="SUPFAM" id="SSF48652">
    <property type="entry name" value="Tetraspanin"/>
    <property type="match status" value="1"/>
</dbReference>
<feature type="chain" id="PRO_0000311907" description="Tetraspanin-11">
    <location>
        <begin position="1"/>
        <end position="253"/>
    </location>
</feature>
<feature type="transmembrane region" description="Helical" evidence="1">
    <location>
        <begin position="19"/>
        <end position="39"/>
    </location>
</feature>
<feature type="transmembrane region" description="Helical" evidence="1">
    <location>
        <begin position="63"/>
        <end position="83"/>
    </location>
</feature>
<feature type="transmembrane region" description="Helical" evidence="1">
    <location>
        <begin position="93"/>
        <end position="113"/>
    </location>
</feature>
<feature type="transmembrane region" description="Helical" evidence="1">
    <location>
        <begin position="220"/>
        <end position="240"/>
    </location>
</feature>
<sequence length="253" mass="28017">MAHCKTEQDDWLLAHLKYLLFIFNFFFWVGGAAVMAVGIWTLVEKSVYLSILASSTFAASAYVLIFVGGLVMTTGFLGFGAIIREQKSCLSTYFCLLLAIFLVELVAGVLAHVYYQRLSDELKRHLHSTLTEHYGQPGAAEITASVDRLQQDFKCCGSNSSADWQHSVYILSQEAIGRQVPDSCCKTVVARCGQRAHPSNIYKVEGGCMAKLEQFLADHLLLMGAVGIGVACLQICGMVLTCCLHRRLQQHFY</sequence>
<proteinExistence type="evidence at transcript level"/>
<protein>
    <recommendedName>
        <fullName>Tetraspanin-11</fullName>
        <shortName>Tspan-11</shortName>
    </recommendedName>
</protein>
<reference key="1">
    <citation type="journal article" date="2004" name="Genome Res.">
        <title>The status, quality, and expansion of the NIH full-length cDNA project: the Mammalian Gene Collection (MGC).</title>
        <authorList>
            <consortium name="The MGC Project Team"/>
        </authorList>
    </citation>
    <scope>NUCLEOTIDE SEQUENCE [LARGE SCALE MRNA]</scope>
    <source>
        <tissue>Brain</tissue>
    </source>
</reference>
<evidence type="ECO:0000255" key="1"/>
<evidence type="ECO:0000305" key="2"/>
<name>TSN11_RAT</name>
<organism>
    <name type="scientific">Rattus norvegicus</name>
    <name type="common">Rat</name>
    <dbReference type="NCBI Taxonomy" id="10116"/>
    <lineage>
        <taxon>Eukaryota</taxon>
        <taxon>Metazoa</taxon>
        <taxon>Chordata</taxon>
        <taxon>Craniata</taxon>
        <taxon>Vertebrata</taxon>
        <taxon>Euteleostomi</taxon>
        <taxon>Mammalia</taxon>
        <taxon>Eutheria</taxon>
        <taxon>Euarchontoglires</taxon>
        <taxon>Glires</taxon>
        <taxon>Rodentia</taxon>
        <taxon>Myomorpha</taxon>
        <taxon>Muroidea</taxon>
        <taxon>Muridae</taxon>
        <taxon>Murinae</taxon>
        <taxon>Rattus</taxon>
    </lineage>
</organism>
<accession>Q568Y5</accession>